<dbReference type="EC" id="6.1.1.6" evidence="1"/>
<dbReference type="EMBL" id="AM406670">
    <property type="protein sequence ID" value="CAL94104.1"/>
    <property type="molecule type" value="Genomic_DNA"/>
</dbReference>
<dbReference type="RefSeq" id="WP_011765220.1">
    <property type="nucleotide sequence ID" value="NC_008702.1"/>
</dbReference>
<dbReference type="SMR" id="A1K5J9"/>
<dbReference type="STRING" id="62928.azo1487"/>
<dbReference type="KEGG" id="aoa:dqs_1610"/>
<dbReference type="KEGG" id="azo:azo1487"/>
<dbReference type="eggNOG" id="COG1190">
    <property type="taxonomic scope" value="Bacteria"/>
</dbReference>
<dbReference type="HOGENOM" id="CLU_008255_6_0_4"/>
<dbReference type="OrthoDB" id="9802326at2"/>
<dbReference type="Proteomes" id="UP000002588">
    <property type="component" value="Chromosome"/>
</dbReference>
<dbReference type="GO" id="GO:0005829">
    <property type="term" value="C:cytosol"/>
    <property type="evidence" value="ECO:0007669"/>
    <property type="project" value="TreeGrafter"/>
</dbReference>
<dbReference type="GO" id="GO:0005524">
    <property type="term" value="F:ATP binding"/>
    <property type="evidence" value="ECO:0007669"/>
    <property type="project" value="UniProtKB-UniRule"/>
</dbReference>
<dbReference type="GO" id="GO:0004824">
    <property type="term" value="F:lysine-tRNA ligase activity"/>
    <property type="evidence" value="ECO:0007669"/>
    <property type="project" value="UniProtKB-UniRule"/>
</dbReference>
<dbReference type="GO" id="GO:0000287">
    <property type="term" value="F:magnesium ion binding"/>
    <property type="evidence" value="ECO:0007669"/>
    <property type="project" value="UniProtKB-UniRule"/>
</dbReference>
<dbReference type="GO" id="GO:0000049">
    <property type="term" value="F:tRNA binding"/>
    <property type="evidence" value="ECO:0007669"/>
    <property type="project" value="TreeGrafter"/>
</dbReference>
<dbReference type="GO" id="GO:0006430">
    <property type="term" value="P:lysyl-tRNA aminoacylation"/>
    <property type="evidence" value="ECO:0007669"/>
    <property type="project" value="UniProtKB-UniRule"/>
</dbReference>
<dbReference type="CDD" id="cd00775">
    <property type="entry name" value="LysRS_core"/>
    <property type="match status" value="1"/>
</dbReference>
<dbReference type="CDD" id="cd04322">
    <property type="entry name" value="LysRS_N"/>
    <property type="match status" value="1"/>
</dbReference>
<dbReference type="FunFam" id="2.40.50.140:FF:000024">
    <property type="entry name" value="Lysine--tRNA ligase"/>
    <property type="match status" value="1"/>
</dbReference>
<dbReference type="FunFam" id="3.30.930.10:FF:000001">
    <property type="entry name" value="Lysine--tRNA ligase"/>
    <property type="match status" value="1"/>
</dbReference>
<dbReference type="Gene3D" id="3.30.930.10">
    <property type="entry name" value="Bira Bifunctional Protein, Domain 2"/>
    <property type="match status" value="1"/>
</dbReference>
<dbReference type="Gene3D" id="2.40.50.140">
    <property type="entry name" value="Nucleic acid-binding proteins"/>
    <property type="match status" value="1"/>
</dbReference>
<dbReference type="HAMAP" id="MF_00252">
    <property type="entry name" value="Lys_tRNA_synth_class2"/>
    <property type="match status" value="1"/>
</dbReference>
<dbReference type="InterPro" id="IPR004364">
    <property type="entry name" value="Aa-tRNA-synt_II"/>
</dbReference>
<dbReference type="InterPro" id="IPR006195">
    <property type="entry name" value="aa-tRNA-synth_II"/>
</dbReference>
<dbReference type="InterPro" id="IPR045864">
    <property type="entry name" value="aa-tRNA-synth_II/BPL/LPL"/>
</dbReference>
<dbReference type="InterPro" id="IPR002313">
    <property type="entry name" value="Lys-tRNA-ligase_II"/>
</dbReference>
<dbReference type="InterPro" id="IPR044136">
    <property type="entry name" value="Lys-tRNA-ligase_II_N"/>
</dbReference>
<dbReference type="InterPro" id="IPR018149">
    <property type="entry name" value="Lys-tRNA-synth_II_C"/>
</dbReference>
<dbReference type="InterPro" id="IPR012340">
    <property type="entry name" value="NA-bd_OB-fold"/>
</dbReference>
<dbReference type="InterPro" id="IPR004365">
    <property type="entry name" value="NA-bd_OB_tRNA"/>
</dbReference>
<dbReference type="NCBIfam" id="TIGR00499">
    <property type="entry name" value="lysS_bact"/>
    <property type="match status" value="1"/>
</dbReference>
<dbReference type="NCBIfam" id="NF001756">
    <property type="entry name" value="PRK00484.1"/>
    <property type="match status" value="1"/>
</dbReference>
<dbReference type="PANTHER" id="PTHR42918:SF15">
    <property type="entry name" value="LYSINE--TRNA LIGASE, CHLOROPLASTIC_MITOCHONDRIAL"/>
    <property type="match status" value="1"/>
</dbReference>
<dbReference type="PANTHER" id="PTHR42918">
    <property type="entry name" value="LYSYL-TRNA SYNTHETASE"/>
    <property type="match status" value="1"/>
</dbReference>
<dbReference type="Pfam" id="PF00152">
    <property type="entry name" value="tRNA-synt_2"/>
    <property type="match status" value="1"/>
</dbReference>
<dbReference type="Pfam" id="PF01336">
    <property type="entry name" value="tRNA_anti-codon"/>
    <property type="match status" value="1"/>
</dbReference>
<dbReference type="PRINTS" id="PR00982">
    <property type="entry name" value="TRNASYNTHLYS"/>
</dbReference>
<dbReference type="SUPFAM" id="SSF55681">
    <property type="entry name" value="Class II aaRS and biotin synthetases"/>
    <property type="match status" value="1"/>
</dbReference>
<dbReference type="SUPFAM" id="SSF50249">
    <property type="entry name" value="Nucleic acid-binding proteins"/>
    <property type="match status" value="1"/>
</dbReference>
<dbReference type="PROSITE" id="PS50862">
    <property type="entry name" value="AA_TRNA_LIGASE_II"/>
    <property type="match status" value="1"/>
</dbReference>
<comment type="catalytic activity">
    <reaction evidence="1">
        <text>tRNA(Lys) + L-lysine + ATP = L-lysyl-tRNA(Lys) + AMP + diphosphate</text>
        <dbReference type="Rhea" id="RHEA:20792"/>
        <dbReference type="Rhea" id="RHEA-COMP:9696"/>
        <dbReference type="Rhea" id="RHEA-COMP:9697"/>
        <dbReference type="ChEBI" id="CHEBI:30616"/>
        <dbReference type="ChEBI" id="CHEBI:32551"/>
        <dbReference type="ChEBI" id="CHEBI:33019"/>
        <dbReference type="ChEBI" id="CHEBI:78442"/>
        <dbReference type="ChEBI" id="CHEBI:78529"/>
        <dbReference type="ChEBI" id="CHEBI:456215"/>
        <dbReference type="EC" id="6.1.1.6"/>
    </reaction>
</comment>
<comment type="cofactor">
    <cofactor evidence="1">
        <name>Mg(2+)</name>
        <dbReference type="ChEBI" id="CHEBI:18420"/>
    </cofactor>
    <text evidence="1">Binds 3 Mg(2+) ions per subunit.</text>
</comment>
<comment type="subunit">
    <text evidence="1">Homodimer.</text>
</comment>
<comment type="subcellular location">
    <subcellularLocation>
        <location evidence="1">Cytoplasm</location>
    </subcellularLocation>
</comment>
<comment type="similarity">
    <text evidence="1">Belongs to the class-II aminoacyl-tRNA synthetase family.</text>
</comment>
<protein>
    <recommendedName>
        <fullName evidence="1">Lysine--tRNA ligase</fullName>
        <ecNumber evidence="1">6.1.1.6</ecNumber>
    </recommendedName>
    <alternativeName>
        <fullName evidence="1">Lysyl-tRNA synthetase</fullName>
        <shortName evidence="1">LysRS</shortName>
    </alternativeName>
</protein>
<name>SYK_AZOSB</name>
<evidence type="ECO:0000255" key="1">
    <source>
        <dbReference type="HAMAP-Rule" id="MF_00252"/>
    </source>
</evidence>
<gene>
    <name evidence="1" type="primary">lysS</name>
    <name type="ordered locus">azo1487</name>
</gene>
<accession>A1K5J9</accession>
<keyword id="KW-0030">Aminoacyl-tRNA synthetase</keyword>
<keyword id="KW-0067">ATP-binding</keyword>
<keyword id="KW-0963">Cytoplasm</keyword>
<keyword id="KW-0436">Ligase</keyword>
<keyword id="KW-0460">Magnesium</keyword>
<keyword id="KW-0479">Metal-binding</keyword>
<keyword id="KW-0547">Nucleotide-binding</keyword>
<keyword id="KW-0648">Protein biosynthesis</keyword>
<keyword id="KW-1185">Reference proteome</keyword>
<sequence length="500" mass="56639">MSDHNATPAAQDENHIIAERREKLAQWRQAGRAFPNDFSRENTAGKLDEVYGDKEPEALEASPVEVRVAGRVMLKRVMGKASFITIQDLSGRIQLYVQRDGVGEDVYADFKHWDIGDIVGCVGTLFKTKTGELTVKASEIRLLTKSLRPLPDKFHGLTDVEQKYRQRYLDLIMSEQTRFTFVARSRMVQSIRNYMINHGFLEVETPMMHPIPGGAAAKPFVTHHNALDMELFLRIAPELYLKRLVVGGLEKVFEVNRNFRNEGLSPRHNPEFTMMEFYEAYADYRSLMNFTEGLIRQAAREALGAESFVYQGRELDLSKPFHRLTIVQAIRKYHPGFSEAQLADAEWVKEKIQAFGEKVKPGGLGSLQLQLFEACAEAELWEPTFIIDYPVEVSPLARASDSNPEITERFELFIVGREIANGFSELNDPEDQAARFLAQAQAKEAGDEEAMYYDADYIRALEFGLPPTGGCGIGIDRLVMLLTDSASIRDVILFPQMRPE</sequence>
<proteinExistence type="inferred from homology"/>
<reference key="1">
    <citation type="journal article" date="2006" name="Nat. Biotechnol.">
        <title>Complete genome of the mutualistic, N2-fixing grass endophyte Azoarcus sp. strain BH72.</title>
        <authorList>
            <person name="Krause A."/>
            <person name="Ramakumar A."/>
            <person name="Bartels D."/>
            <person name="Battistoni F."/>
            <person name="Bekel T."/>
            <person name="Boch J."/>
            <person name="Boehm M."/>
            <person name="Friedrich F."/>
            <person name="Hurek T."/>
            <person name="Krause L."/>
            <person name="Linke B."/>
            <person name="McHardy A.C."/>
            <person name="Sarkar A."/>
            <person name="Schneiker S."/>
            <person name="Syed A.A."/>
            <person name="Thauer R."/>
            <person name="Vorhoelter F.-J."/>
            <person name="Weidner S."/>
            <person name="Puehler A."/>
            <person name="Reinhold-Hurek B."/>
            <person name="Kaiser O."/>
            <person name="Goesmann A."/>
        </authorList>
    </citation>
    <scope>NUCLEOTIDE SEQUENCE [LARGE SCALE GENOMIC DNA]</scope>
    <source>
        <strain>BH72</strain>
    </source>
</reference>
<organism>
    <name type="scientific">Azoarcus sp. (strain BH72)</name>
    <dbReference type="NCBI Taxonomy" id="418699"/>
    <lineage>
        <taxon>Bacteria</taxon>
        <taxon>Pseudomonadati</taxon>
        <taxon>Pseudomonadota</taxon>
        <taxon>Betaproteobacteria</taxon>
        <taxon>Rhodocyclales</taxon>
        <taxon>Zoogloeaceae</taxon>
        <taxon>Azoarcus</taxon>
    </lineage>
</organism>
<feature type="chain" id="PRO_1000012839" description="Lysine--tRNA ligase">
    <location>
        <begin position="1"/>
        <end position="500"/>
    </location>
</feature>
<feature type="binding site" evidence="1">
    <location>
        <position position="411"/>
    </location>
    <ligand>
        <name>Mg(2+)</name>
        <dbReference type="ChEBI" id="CHEBI:18420"/>
        <label>1</label>
    </ligand>
</feature>
<feature type="binding site" evidence="1">
    <location>
        <position position="418"/>
    </location>
    <ligand>
        <name>Mg(2+)</name>
        <dbReference type="ChEBI" id="CHEBI:18420"/>
        <label>1</label>
    </ligand>
</feature>
<feature type="binding site" evidence="1">
    <location>
        <position position="418"/>
    </location>
    <ligand>
        <name>Mg(2+)</name>
        <dbReference type="ChEBI" id="CHEBI:18420"/>
        <label>2</label>
    </ligand>
</feature>